<feature type="chain" id="PRO_0000340619" description="Sulfate adenylyltransferase">
    <location>
        <begin position="1"/>
        <end position="381"/>
    </location>
</feature>
<accession>A9WFJ2</accession>
<evidence type="ECO:0000255" key="1">
    <source>
        <dbReference type="HAMAP-Rule" id="MF_00066"/>
    </source>
</evidence>
<dbReference type="EC" id="2.7.7.4" evidence="1"/>
<dbReference type="EMBL" id="CP000909">
    <property type="protein sequence ID" value="ABY33930.1"/>
    <property type="molecule type" value="Genomic_DNA"/>
</dbReference>
<dbReference type="RefSeq" id="WP_012256586.1">
    <property type="nucleotide sequence ID" value="NC_010175.1"/>
</dbReference>
<dbReference type="RefSeq" id="YP_001634319.1">
    <property type="nucleotide sequence ID" value="NC_010175.1"/>
</dbReference>
<dbReference type="SMR" id="A9WFJ2"/>
<dbReference type="FunCoup" id="A9WFJ2">
    <property type="interactions" value="306"/>
</dbReference>
<dbReference type="STRING" id="324602.Caur_0690"/>
<dbReference type="EnsemblBacteria" id="ABY33930">
    <property type="protein sequence ID" value="ABY33930"/>
    <property type="gene ID" value="Caur_0690"/>
</dbReference>
<dbReference type="KEGG" id="cau:Caur_0690"/>
<dbReference type="PATRIC" id="fig|324602.8.peg.786"/>
<dbReference type="eggNOG" id="COG2046">
    <property type="taxonomic scope" value="Bacteria"/>
</dbReference>
<dbReference type="HOGENOM" id="CLU_022950_1_1_0"/>
<dbReference type="InParanoid" id="A9WFJ2"/>
<dbReference type="UniPathway" id="UPA00140">
    <property type="reaction ID" value="UER00204"/>
</dbReference>
<dbReference type="Proteomes" id="UP000002008">
    <property type="component" value="Chromosome"/>
</dbReference>
<dbReference type="GO" id="GO:0005524">
    <property type="term" value="F:ATP binding"/>
    <property type="evidence" value="ECO:0007669"/>
    <property type="project" value="UniProtKB-KW"/>
</dbReference>
<dbReference type="GO" id="GO:0004781">
    <property type="term" value="F:sulfate adenylyltransferase (ATP) activity"/>
    <property type="evidence" value="ECO:0007669"/>
    <property type="project" value="UniProtKB-UniRule"/>
</dbReference>
<dbReference type="GO" id="GO:0070814">
    <property type="term" value="P:hydrogen sulfide biosynthetic process"/>
    <property type="evidence" value="ECO:0007669"/>
    <property type="project" value="UniProtKB-UniRule"/>
</dbReference>
<dbReference type="GO" id="GO:0000103">
    <property type="term" value="P:sulfate assimilation"/>
    <property type="evidence" value="ECO:0007669"/>
    <property type="project" value="UniProtKB-UniRule"/>
</dbReference>
<dbReference type="CDD" id="cd00517">
    <property type="entry name" value="ATPS"/>
    <property type="match status" value="1"/>
</dbReference>
<dbReference type="Gene3D" id="3.40.50.620">
    <property type="entry name" value="HUPs"/>
    <property type="match status" value="1"/>
</dbReference>
<dbReference type="Gene3D" id="3.10.400.10">
    <property type="entry name" value="Sulfate adenylyltransferase"/>
    <property type="match status" value="1"/>
</dbReference>
<dbReference type="HAMAP" id="MF_00066">
    <property type="entry name" value="Sulf_adenylyltr"/>
    <property type="match status" value="1"/>
</dbReference>
<dbReference type="InterPro" id="IPR025980">
    <property type="entry name" value="ATP-Sase_PUA-like_dom"/>
</dbReference>
<dbReference type="InterPro" id="IPR015947">
    <property type="entry name" value="PUA-like_sf"/>
</dbReference>
<dbReference type="InterPro" id="IPR014729">
    <property type="entry name" value="Rossmann-like_a/b/a_fold"/>
</dbReference>
<dbReference type="InterPro" id="IPR020792">
    <property type="entry name" value="SO4_adenylyltransferase_pro"/>
</dbReference>
<dbReference type="InterPro" id="IPR024951">
    <property type="entry name" value="Sulfurylase_cat_dom"/>
</dbReference>
<dbReference type="InterPro" id="IPR002650">
    <property type="entry name" value="Sulphate_adenylyltransferase"/>
</dbReference>
<dbReference type="NCBIfam" id="NF003166">
    <property type="entry name" value="PRK04149.1"/>
    <property type="match status" value="1"/>
</dbReference>
<dbReference type="NCBIfam" id="TIGR00339">
    <property type="entry name" value="sopT"/>
    <property type="match status" value="1"/>
</dbReference>
<dbReference type="PANTHER" id="PTHR43509">
    <property type="match status" value="1"/>
</dbReference>
<dbReference type="PANTHER" id="PTHR43509:SF1">
    <property type="entry name" value="SULFATE ADENYLYLTRANSFERASE"/>
    <property type="match status" value="1"/>
</dbReference>
<dbReference type="Pfam" id="PF01747">
    <property type="entry name" value="ATP-sulfurylase"/>
    <property type="match status" value="1"/>
</dbReference>
<dbReference type="Pfam" id="PF14306">
    <property type="entry name" value="PUA_2"/>
    <property type="match status" value="1"/>
</dbReference>
<dbReference type="SUPFAM" id="SSF52374">
    <property type="entry name" value="Nucleotidylyl transferase"/>
    <property type="match status" value="1"/>
</dbReference>
<dbReference type="SUPFAM" id="SSF88697">
    <property type="entry name" value="PUA domain-like"/>
    <property type="match status" value="1"/>
</dbReference>
<reference key="1">
    <citation type="journal article" date="2011" name="BMC Genomics">
        <title>Complete genome sequence of the filamentous anoxygenic phototrophic bacterium Chloroflexus aurantiacus.</title>
        <authorList>
            <person name="Tang K.H."/>
            <person name="Barry K."/>
            <person name="Chertkov O."/>
            <person name="Dalin E."/>
            <person name="Han C.S."/>
            <person name="Hauser L.J."/>
            <person name="Honchak B.M."/>
            <person name="Karbach L.E."/>
            <person name="Land M.L."/>
            <person name="Lapidus A."/>
            <person name="Larimer F.W."/>
            <person name="Mikhailova N."/>
            <person name="Pitluck S."/>
            <person name="Pierson B.K."/>
            <person name="Blankenship R.E."/>
        </authorList>
    </citation>
    <scope>NUCLEOTIDE SEQUENCE [LARGE SCALE GENOMIC DNA]</scope>
    <source>
        <strain>ATCC 29366 / DSM 635 / J-10-fl</strain>
    </source>
</reference>
<name>SAT_CHLAA</name>
<comment type="catalytic activity">
    <reaction evidence="1">
        <text>sulfate + ATP + H(+) = adenosine 5'-phosphosulfate + diphosphate</text>
        <dbReference type="Rhea" id="RHEA:18133"/>
        <dbReference type="ChEBI" id="CHEBI:15378"/>
        <dbReference type="ChEBI" id="CHEBI:16189"/>
        <dbReference type="ChEBI" id="CHEBI:30616"/>
        <dbReference type="ChEBI" id="CHEBI:33019"/>
        <dbReference type="ChEBI" id="CHEBI:58243"/>
        <dbReference type="EC" id="2.7.7.4"/>
    </reaction>
</comment>
<comment type="pathway">
    <text evidence="1">Sulfur metabolism; hydrogen sulfide biosynthesis; sulfite from sulfate: step 1/3.</text>
</comment>
<comment type="similarity">
    <text evidence="1">Belongs to the sulfate adenylyltransferase family.</text>
</comment>
<sequence length="381" mass="42918">MIPQTSSLPKPHGGVLVERIRVAHPREYDHLPALELDERAYADLELIATGVYSPLEGFMGQADYLSVLEEMRLTNGLPWSIPITLGVSAQDAASYRKTVRLTKDGRTVGLLDVEEQYRPDKEHEALAVYRTTDLAHPGVAALFARGDVYLAGKVQLLTLDRGPFPEHHYTPRETRQLFQERGWQTIVAFQTRNPIHRAHEYLHKVALESLDGLFLHPLVGSTKSDDVPAPVRMAAYKVLLERYYPQNRVLLGVYPAAMRYAGPREAILHAISRKNYGCTHFIVGRDHAGVGNYYGPYEAQAIFDHFRPEEIGIHILKFEQTFYCVTCAAVVSPRTCPHDTQHHLVLSGTRVRELLRAGSPLPPEFTRPEVAEVLRAAYQTL</sequence>
<organism>
    <name type="scientific">Chloroflexus aurantiacus (strain ATCC 29366 / DSM 635 / J-10-fl)</name>
    <dbReference type="NCBI Taxonomy" id="324602"/>
    <lineage>
        <taxon>Bacteria</taxon>
        <taxon>Bacillati</taxon>
        <taxon>Chloroflexota</taxon>
        <taxon>Chloroflexia</taxon>
        <taxon>Chloroflexales</taxon>
        <taxon>Chloroflexineae</taxon>
        <taxon>Chloroflexaceae</taxon>
        <taxon>Chloroflexus</taxon>
    </lineage>
</organism>
<keyword id="KW-0067">ATP-binding</keyword>
<keyword id="KW-0547">Nucleotide-binding</keyword>
<keyword id="KW-0548">Nucleotidyltransferase</keyword>
<keyword id="KW-1185">Reference proteome</keyword>
<keyword id="KW-0808">Transferase</keyword>
<gene>
    <name evidence="1" type="primary">sat</name>
    <name type="ordered locus">Caur_0690</name>
</gene>
<protein>
    <recommendedName>
        <fullName evidence="1">Sulfate adenylyltransferase</fullName>
        <ecNumber evidence="1">2.7.7.4</ecNumber>
    </recommendedName>
    <alternativeName>
        <fullName evidence="1">ATP-sulfurylase</fullName>
    </alternativeName>
    <alternativeName>
        <fullName evidence="1">Sulfate adenylate transferase</fullName>
        <shortName evidence="1">SAT</shortName>
    </alternativeName>
</protein>
<proteinExistence type="inferred from homology"/>